<sequence>MTRTALVTTALPYANGPLHLGHLVGYIQADIWVRARRLRGDKTWFVCADDTHGTPIMLAAEKAGVTPEAFIASIQASHERDFAAFGVTFDHYDSTNSPVNRELTEAFYTKLEAAGHISRRSVAQFYDPAKGMFLPDRYIKGICPNCGSADQYGDNCEVCGATYAPTELKEPRSVISGATPELRDSEHFFFEVGQFDGFLHEWLAGDVALPGVKAKLKEWLDAEGGLRAWDISRDAPYFGFQMPGQPGKYFYVWLDAPIGYLCSFKTLCAQMGEDFAAHLVDGTQTELHHFIGKDIVNFHGLFWPAVLHGTGHRAPTRLHVNGYLTVDGAKMSKSRGTFVMARTFLDVGLEPEALRYYFAAKSSGGVDDLDLNLGDFIARVNADLVGKFVNLASRCAGFIGKRFDGKLAEALPDAAQYDRFVAALAPIREAYERNDAASAIRQTMALADEANKYIDDTKPWVIAKQDSADAQLQSVCTQGLNLFRVLVAALKPILPRTCAEAEAFLSAPMTSWEDVIRPLTSHTIQPYTALFTRIDPKLIDAMTDASKDTLAAPAAPATTSKAAPAKPDTKPAAAANPQSPISNPSFIGMDDFAKLDLRIGKVLVCECVEGSDKLLRFELDAGELGKRQIFSGIRASYGEPEALVGRSVVFIANLAPRKMRFGISDGMILSAGFDGGALALLDADSGAQPGMPVR</sequence>
<dbReference type="EC" id="6.1.1.10" evidence="1"/>
<dbReference type="EMBL" id="CP000967">
    <property type="protein sequence ID" value="ACD59606.1"/>
    <property type="molecule type" value="Genomic_DNA"/>
</dbReference>
<dbReference type="RefSeq" id="WP_011258663.1">
    <property type="nucleotide sequence ID" value="NC_010717.2"/>
</dbReference>
<dbReference type="SMR" id="B2SRQ4"/>
<dbReference type="KEGG" id="xop:PXO_01790"/>
<dbReference type="eggNOG" id="COG0073">
    <property type="taxonomic scope" value="Bacteria"/>
</dbReference>
<dbReference type="eggNOG" id="COG0143">
    <property type="taxonomic scope" value="Bacteria"/>
</dbReference>
<dbReference type="HOGENOM" id="CLU_009710_7_0_6"/>
<dbReference type="Proteomes" id="UP000001740">
    <property type="component" value="Chromosome"/>
</dbReference>
<dbReference type="GO" id="GO:0005829">
    <property type="term" value="C:cytosol"/>
    <property type="evidence" value="ECO:0007669"/>
    <property type="project" value="TreeGrafter"/>
</dbReference>
<dbReference type="GO" id="GO:0005524">
    <property type="term" value="F:ATP binding"/>
    <property type="evidence" value="ECO:0007669"/>
    <property type="project" value="UniProtKB-UniRule"/>
</dbReference>
<dbReference type="GO" id="GO:0046872">
    <property type="term" value="F:metal ion binding"/>
    <property type="evidence" value="ECO:0007669"/>
    <property type="project" value="UniProtKB-KW"/>
</dbReference>
<dbReference type="GO" id="GO:0004825">
    <property type="term" value="F:methionine-tRNA ligase activity"/>
    <property type="evidence" value="ECO:0007669"/>
    <property type="project" value="UniProtKB-UniRule"/>
</dbReference>
<dbReference type="GO" id="GO:0000049">
    <property type="term" value="F:tRNA binding"/>
    <property type="evidence" value="ECO:0007669"/>
    <property type="project" value="UniProtKB-KW"/>
</dbReference>
<dbReference type="GO" id="GO:0006431">
    <property type="term" value="P:methionyl-tRNA aminoacylation"/>
    <property type="evidence" value="ECO:0007669"/>
    <property type="project" value="UniProtKB-UniRule"/>
</dbReference>
<dbReference type="CDD" id="cd07957">
    <property type="entry name" value="Anticodon_Ia_Met"/>
    <property type="match status" value="1"/>
</dbReference>
<dbReference type="CDD" id="cd00814">
    <property type="entry name" value="MetRS_core"/>
    <property type="match status" value="1"/>
</dbReference>
<dbReference type="CDD" id="cd02800">
    <property type="entry name" value="tRNA_bind_EcMetRS_like"/>
    <property type="match status" value="1"/>
</dbReference>
<dbReference type="FunFam" id="1.10.730.10:FF:000005">
    <property type="entry name" value="Methionine--tRNA ligase"/>
    <property type="match status" value="1"/>
</dbReference>
<dbReference type="FunFam" id="2.20.28.20:FF:000001">
    <property type="entry name" value="Methionine--tRNA ligase"/>
    <property type="match status" value="1"/>
</dbReference>
<dbReference type="FunFam" id="2.40.50.140:FF:000042">
    <property type="entry name" value="Methionine--tRNA ligase"/>
    <property type="match status" value="1"/>
</dbReference>
<dbReference type="Gene3D" id="3.40.50.620">
    <property type="entry name" value="HUPs"/>
    <property type="match status" value="1"/>
</dbReference>
<dbReference type="Gene3D" id="1.10.730.10">
    <property type="entry name" value="Isoleucyl-tRNA Synthetase, Domain 1"/>
    <property type="match status" value="1"/>
</dbReference>
<dbReference type="Gene3D" id="2.20.28.20">
    <property type="entry name" value="Methionyl-tRNA synthetase, Zn-domain"/>
    <property type="match status" value="1"/>
</dbReference>
<dbReference type="Gene3D" id="2.40.50.140">
    <property type="entry name" value="Nucleic acid-binding proteins"/>
    <property type="match status" value="1"/>
</dbReference>
<dbReference type="HAMAP" id="MF_00098">
    <property type="entry name" value="Met_tRNA_synth_type1"/>
    <property type="match status" value="1"/>
</dbReference>
<dbReference type="InterPro" id="IPR001412">
    <property type="entry name" value="aa-tRNA-synth_I_CS"/>
</dbReference>
<dbReference type="InterPro" id="IPR041872">
    <property type="entry name" value="Anticodon_Met"/>
</dbReference>
<dbReference type="InterPro" id="IPR004495">
    <property type="entry name" value="Met-tRNA-synth_bsu_C"/>
</dbReference>
<dbReference type="InterPro" id="IPR023458">
    <property type="entry name" value="Met-tRNA_ligase_1"/>
</dbReference>
<dbReference type="InterPro" id="IPR014758">
    <property type="entry name" value="Met-tRNA_synth"/>
</dbReference>
<dbReference type="InterPro" id="IPR015413">
    <property type="entry name" value="Methionyl/Leucyl_tRNA_Synth"/>
</dbReference>
<dbReference type="InterPro" id="IPR033911">
    <property type="entry name" value="MetRS_core"/>
</dbReference>
<dbReference type="InterPro" id="IPR029038">
    <property type="entry name" value="MetRS_Zn"/>
</dbReference>
<dbReference type="InterPro" id="IPR012340">
    <property type="entry name" value="NA-bd_OB-fold"/>
</dbReference>
<dbReference type="InterPro" id="IPR014729">
    <property type="entry name" value="Rossmann-like_a/b/a_fold"/>
</dbReference>
<dbReference type="InterPro" id="IPR002547">
    <property type="entry name" value="tRNA-bd_dom"/>
</dbReference>
<dbReference type="InterPro" id="IPR009080">
    <property type="entry name" value="tRNAsynth_Ia_anticodon-bd"/>
</dbReference>
<dbReference type="NCBIfam" id="TIGR00398">
    <property type="entry name" value="metG"/>
    <property type="match status" value="1"/>
</dbReference>
<dbReference type="NCBIfam" id="TIGR00399">
    <property type="entry name" value="metG_C_term"/>
    <property type="match status" value="1"/>
</dbReference>
<dbReference type="NCBIfam" id="NF001100">
    <property type="entry name" value="PRK00133.1"/>
    <property type="match status" value="1"/>
</dbReference>
<dbReference type="PANTHER" id="PTHR45765">
    <property type="entry name" value="METHIONINE--TRNA LIGASE"/>
    <property type="match status" value="1"/>
</dbReference>
<dbReference type="PANTHER" id="PTHR45765:SF1">
    <property type="entry name" value="METHIONINE--TRNA LIGASE, CYTOPLASMIC"/>
    <property type="match status" value="1"/>
</dbReference>
<dbReference type="Pfam" id="PF19303">
    <property type="entry name" value="Anticodon_3"/>
    <property type="match status" value="1"/>
</dbReference>
<dbReference type="Pfam" id="PF09334">
    <property type="entry name" value="tRNA-synt_1g"/>
    <property type="match status" value="1"/>
</dbReference>
<dbReference type="Pfam" id="PF01588">
    <property type="entry name" value="tRNA_bind"/>
    <property type="match status" value="1"/>
</dbReference>
<dbReference type="PRINTS" id="PR01041">
    <property type="entry name" value="TRNASYNTHMET"/>
</dbReference>
<dbReference type="SUPFAM" id="SSF47323">
    <property type="entry name" value="Anticodon-binding domain of a subclass of class I aminoacyl-tRNA synthetases"/>
    <property type="match status" value="1"/>
</dbReference>
<dbReference type="SUPFAM" id="SSF57770">
    <property type="entry name" value="Methionyl-tRNA synthetase (MetRS), Zn-domain"/>
    <property type="match status" value="1"/>
</dbReference>
<dbReference type="SUPFAM" id="SSF50249">
    <property type="entry name" value="Nucleic acid-binding proteins"/>
    <property type="match status" value="1"/>
</dbReference>
<dbReference type="SUPFAM" id="SSF52374">
    <property type="entry name" value="Nucleotidylyl transferase"/>
    <property type="match status" value="1"/>
</dbReference>
<dbReference type="PROSITE" id="PS00178">
    <property type="entry name" value="AA_TRNA_LIGASE_I"/>
    <property type="match status" value="1"/>
</dbReference>
<dbReference type="PROSITE" id="PS50886">
    <property type="entry name" value="TRBD"/>
    <property type="match status" value="1"/>
</dbReference>
<gene>
    <name evidence="1" type="primary">metG</name>
    <name type="ordered locus">PXO_01790</name>
</gene>
<comment type="function">
    <text evidence="1">Is required not only for elongation of protein synthesis but also for the initiation of all mRNA translation through initiator tRNA(fMet) aminoacylation.</text>
</comment>
<comment type="catalytic activity">
    <reaction evidence="1">
        <text>tRNA(Met) + L-methionine + ATP = L-methionyl-tRNA(Met) + AMP + diphosphate</text>
        <dbReference type="Rhea" id="RHEA:13481"/>
        <dbReference type="Rhea" id="RHEA-COMP:9667"/>
        <dbReference type="Rhea" id="RHEA-COMP:9698"/>
        <dbReference type="ChEBI" id="CHEBI:30616"/>
        <dbReference type="ChEBI" id="CHEBI:33019"/>
        <dbReference type="ChEBI" id="CHEBI:57844"/>
        <dbReference type="ChEBI" id="CHEBI:78442"/>
        <dbReference type="ChEBI" id="CHEBI:78530"/>
        <dbReference type="ChEBI" id="CHEBI:456215"/>
        <dbReference type="EC" id="6.1.1.10"/>
    </reaction>
</comment>
<comment type="cofactor">
    <cofactor evidence="1">
        <name>Zn(2+)</name>
        <dbReference type="ChEBI" id="CHEBI:29105"/>
    </cofactor>
    <text evidence="1">Binds 1 zinc ion per subunit.</text>
</comment>
<comment type="subunit">
    <text evidence="1">Homodimer.</text>
</comment>
<comment type="subcellular location">
    <subcellularLocation>
        <location evidence="1">Cytoplasm</location>
    </subcellularLocation>
</comment>
<comment type="similarity">
    <text evidence="1">Belongs to the class-I aminoacyl-tRNA synthetase family. MetG type 1 subfamily.</text>
</comment>
<accession>B2SRQ4</accession>
<protein>
    <recommendedName>
        <fullName evidence="1">Methionine--tRNA ligase</fullName>
        <ecNumber evidence="1">6.1.1.10</ecNumber>
    </recommendedName>
    <alternativeName>
        <fullName evidence="1">Methionyl-tRNA synthetase</fullName>
        <shortName evidence="1">MetRS</shortName>
    </alternativeName>
</protein>
<evidence type="ECO:0000255" key="1">
    <source>
        <dbReference type="HAMAP-Rule" id="MF_00098"/>
    </source>
</evidence>
<evidence type="ECO:0000256" key="2">
    <source>
        <dbReference type="SAM" id="MobiDB-lite"/>
    </source>
</evidence>
<keyword id="KW-0030">Aminoacyl-tRNA synthetase</keyword>
<keyword id="KW-0067">ATP-binding</keyword>
<keyword id="KW-0963">Cytoplasm</keyword>
<keyword id="KW-0436">Ligase</keyword>
<keyword id="KW-0479">Metal-binding</keyword>
<keyword id="KW-0547">Nucleotide-binding</keyword>
<keyword id="KW-0648">Protein biosynthesis</keyword>
<keyword id="KW-0694">RNA-binding</keyword>
<keyword id="KW-0820">tRNA-binding</keyword>
<keyword id="KW-0862">Zinc</keyword>
<feature type="chain" id="PRO_1000093742" description="Methionine--tRNA ligase">
    <location>
        <begin position="1"/>
        <end position="694"/>
    </location>
</feature>
<feature type="domain" description="tRNA-binding" evidence="1">
    <location>
        <begin position="591"/>
        <end position="694"/>
    </location>
</feature>
<feature type="region of interest" description="Disordered" evidence="2">
    <location>
        <begin position="550"/>
        <end position="580"/>
    </location>
</feature>
<feature type="short sequence motif" description="'HIGH' region">
    <location>
        <begin position="12"/>
        <end position="22"/>
    </location>
</feature>
<feature type="short sequence motif" description="'KMSKS' region">
    <location>
        <begin position="330"/>
        <end position="334"/>
    </location>
</feature>
<feature type="compositionally biased region" description="Low complexity" evidence="2">
    <location>
        <begin position="550"/>
        <end position="575"/>
    </location>
</feature>
<feature type="binding site" evidence="1">
    <location>
        <position position="143"/>
    </location>
    <ligand>
        <name>Zn(2+)</name>
        <dbReference type="ChEBI" id="CHEBI:29105"/>
    </ligand>
</feature>
<feature type="binding site" evidence="1">
    <location>
        <position position="146"/>
    </location>
    <ligand>
        <name>Zn(2+)</name>
        <dbReference type="ChEBI" id="CHEBI:29105"/>
    </ligand>
</feature>
<feature type="binding site" evidence="1">
    <location>
        <position position="156"/>
    </location>
    <ligand>
        <name>Zn(2+)</name>
        <dbReference type="ChEBI" id="CHEBI:29105"/>
    </ligand>
</feature>
<feature type="binding site" evidence="1">
    <location>
        <position position="159"/>
    </location>
    <ligand>
        <name>Zn(2+)</name>
        <dbReference type="ChEBI" id="CHEBI:29105"/>
    </ligand>
</feature>
<feature type="binding site" evidence="1">
    <location>
        <position position="333"/>
    </location>
    <ligand>
        <name>ATP</name>
        <dbReference type="ChEBI" id="CHEBI:30616"/>
    </ligand>
</feature>
<proteinExistence type="inferred from homology"/>
<organism>
    <name type="scientific">Xanthomonas oryzae pv. oryzae (strain PXO99A)</name>
    <dbReference type="NCBI Taxonomy" id="360094"/>
    <lineage>
        <taxon>Bacteria</taxon>
        <taxon>Pseudomonadati</taxon>
        <taxon>Pseudomonadota</taxon>
        <taxon>Gammaproteobacteria</taxon>
        <taxon>Lysobacterales</taxon>
        <taxon>Lysobacteraceae</taxon>
        <taxon>Xanthomonas</taxon>
    </lineage>
</organism>
<reference key="1">
    <citation type="journal article" date="2008" name="BMC Genomics">
        <title>Genome sequence and rapid evolution of the rice pathogen Xanthomonas oryzae pv. oryzae PXO99A.</title>
        <authorList>
            <person name="Salzberg S.L."/>
            <person name="Sommer D.D."/>
            <person name="Schatz M.C."/>
            <person name="Phillippy A.M."/>
            <person name="Rabinowicz P.D."/>
            <person name="Tsuge S."/>
            <person name="Furutani A."/>
            <person name="Ochiai H."/>
            <person name="Delcher A.L."/>
            <person name="Kelley D."/>
            <person name="Madupu R."/>
            <person name="Puiu D."/>
            <person name="Radune D."/>
            <person name="Shumway M."/>
            <person name="Trapnell C."/>
            <person name="Aparna G."/>
            <person name="Jha G."/>
            <person name="Pandey A."/>
            <person name="Patil P.B."/>
            <person name="Ishihara H."/>
            <person name="Meyer D.F."/>
            <person name="Szurek B."/>
            <person name="Verdier V."/>
            <person name="Koebnik R."/>
            <person name="Dow J.M."/>
            <person name="Ryan R.P."/>
            <person name="Hirata H."/>
            <person name="Tsuyumu S."/>
            <person name="Won Lee S."/>
            <person name="Seo Y.-S."/>
            <person name="Sriariyanum M."/>
            <person name="Ronald P.C."/>
            <person name="Sonti R.V."/>
            <person name="Van Sluys M.-A."/>
            <person name="Leach J.E."/>
            <person name="White F.F."/>
            <person name="Bogdanove A.J."/>
        </authorList>
    </citation>
    <scope>NUCLEOTIDE SEQUENCE [LARGE SCALE GENOMIC DNA]</scope>
    <source>
        <strain>PXO99A</strain>
    </source>
</reference>
<name>SYM_XANOP</name>